<dbReference type="EMBL" id="U00096">
    <property type="protein sequence ID" value="AYC08226.1"/>
    <property type="molecule type" value="Genomic_DNA"/>
</dbReference>
<dbReference type="EMBL" id="AP009048">
    <property type="protein sequence ID" value="BAE76567.1"/>
    <property type="molecule type" value="Genomic_DNA"/>
</dbReference>
<dbReference type="BioGRID" id="4260411">
    <property type="interactions" value="14"/>
</dbReference>
<dbReference type="FunCoup" id="Q2EES3">
    <property type="interactions" value="1"/>
</dbReference>
<dbReference type="IntAct" id="Q2EES3">
    <property type="interactions" value="1"/>
</dbReference>
<dbReference type="EnsemblBacteria" id="AYC08226">
    <property type="protein sequence ID" value="AYC08226"/>
    <property type="gene ID" value="b4538"/>
</dbReference>
<dbReference type="KEGG" id="ecj:JW5328"/>
<dbReference type="eggNOG" id="COG4917">
    <property type="taxonomic scope" value="Bacteria"/>
</dbReference>
<dbReference type="HOGENOM" id="CLU_165390_0_0_6"/>
<dbReference type="InParanoid" id="Q2EES3"/>
<dbReference type="OMA" id="KTPYWAM"/>
<dbReference type="PhylomeDB" id="Q2EES3"/>
<dbReference type="BioCyc" id="EcoCyc:MONOMER0-2678"/>
<dbReference type="PRO" id="PR:Q2EES3"/>
<dbReference type="Proteomes" id="UP000000625">
    <property type="component" value="Chromosome"/>
</dbReference>
<dbReference type="GO" id="GO:0005524">
    <property type="term" value="F:ATP binding"/>
    <property type="evidence" value="ECO:0007669"/>
    <property type="project" value="InterPro"/>
</dbReference>
<dbReference type="GO" id="GO:0006576">
    <property type="term" value="P:biogenic amine metabolic process"/>
    <property type="evidence" value="ECO:0007669"/>
    <property type="project" value="InterPro"/>
</dbReference>
<dbReference type="Gene3D" id="3.40.50.300">
    <property type="entry name" value="P-loop containing nucleotide triphosphate hydrolases"/>
    <property type="match status" value="1"/>
</dbReference>
<dbReference type="InterPro" id="IPR012381">
    <property type="entry name" value="EutP_PduV"/>
</dbReference>
<dbReference type="InterPro" id="IPR027417">
    <property type="entry name" value="P-loop_NTPase"/>
</dbReference>
<dbReference type="PANTHER" id="PTHR40453">
    <property type="entry name" value="PROTEIN YOEF"/>
    <property type="match status" value="1"/>
</dbReference>
<dbReference type="PANTHER" id="PTHR40453:SF1">
    <property type="entry name" value="PROTEIN YOEF"/>
    <property type="match status" value="1"/>
</dbReference>
<dbReference type="Pfam" id="PF10662">
    <property type="entry name" value="PduV-EutP"/>
    <property type="match status" value="1"/>
</dbReference>
<dbReference type="SUPFAM" id="SSF52540">
    <property type="entry name" value="P-loop containing nucleoside triphosphate hydrolases"/>
    <property type="match status" value="1"/>
</dbReference>
<keyword id="KW-1185">Reference proteome</keyword>
<name>YOEF_ECOLI</name>
<reference key="1">
    <citation type="journal article" date="1997" name="Science">
        <title>The complete genome sequence of Escherichia coli K-12.</title>
        <authorList>
            <person name="Blattner F.R."/>
            <person name="Plunkett G. III"/>
            <person name="Bloch C.A."/>
            <person name="Perna N.T."/>
            <person name="Burland V."/>
            <person name="Riley M."/>
            <person name="Collado-Vides J."/>
            <person name="Glasner J.D."/>
            <person name="Rode C.K."/>
            <person name="Mayhew G.F."/>
            <person name="Gregor J."/>
            <person name="Davis N.W."/>
            <person name="Kirkpatrick H.A."/>
            <person name="Goeden M.A."/>
            <person name="Rose D.J."/>
            <person name="Mau B."/>
            <person name="Shao Y."/>
        </authorList>
    </citation>
    <scope>NUCLEOTIDE SEQUENCE [LARGE SCALE GENOMIC DNA]</scope>
    <source>
        <strain>K12 / MG1655 / ATCC 47076</strain>
    </source>
</reference>
<reference key="2">
    <citation type="journal article" date="2006" name="Mol. Syst. Biol.">
        <title>Highly accurate genome sequences of Escherichia coli K-12 strains MG1655 and W3110.</title>
        <authorList>
            <person name="Hayashi K."/>
            <person name="Morooka N."/>
            <person name="Yamamoto Y."/>
            <person name="Fujita K."/>
            <person name="Isono K."/>
            <person name="Choi S."/>
            <person name="Ohtsubo E."/>
            <person name="Baba T."/>
            <person name="Wanner B.L."/>
            <person name="Mori H."/>
            <person name="Horiuchi T."/>
        </authorList>
    </citation>
    <scope>NUCLEOTIDE SEQUENCE [LARGE SCALE GENOMIC DNA]</scope>
    <source>
        <strain>K12 / W3110 / ATCC 27325 / DSM 5911</strain>
    </source>
</reference>
<accession>Q2EES3</accession>
<accession>A0A385XJJ5</accession>
<accession>Q2MAY9</accession>
<proteinExistence type="predicted"/>
<organism>
    <name type="scientific">Escherichia coli (strain K12)</name>
    <dbReference type="NCBI Taxonomy" id="83333"/>
    <lineage>
        <taxon>Bacteria</taxon>
        <taxon>Pseudomonadati</taxon>
        <taxon>Pseudomonadota</taxon>
        <taxon>Gammaproteobacteria</taxon>
        <taxon>Enterobacterales</taxon>
        <taxon>Enterobacteriaceae</taxon>
        <taxon>Escherichia</taxon>
    </lineage>
</organism>
<evidence type="ECO:0000305" key="1"/>
<comment type="miscellaneous">
    <text evidence="1">Encoded by the CP4-44 prophage.</text>
</comment>
<protein>
    <recommendedName>
        <fullName>Protein YoeF</fullName>
    </recommendedName>
</protein>
<sequence length="118" mass="12969">MAGVRQHGWRAIPAVCSEYGADTLPDRYRSDGRCLLFWQQAGISALKQELEVKTPYRAMNHPVIGVVTKADLASMEQISLVKSWLREAGAHNVLVTSAVNNNGVTELFALLHTEEGCC</sequence>
<feature type="chain" id="PRO_0000252217" description="Protein YoeF">
    <location>
        <begin position="1"/>
        <end position="118"/>
    </location>
</feature>
<gene>
    <name type="primary">yoeF</name>
    <name type="ordered locus">b4538</name>
    <name type="ordered locus">JW5328</name>
</gene>